<dbReference type="EMBL" id="AF071024">
    <property type="protein sequence ID" value="AAD08807.1"/>
    <property type="molecule type" value="Genomic_DNA"/>
</dbReference>
<dbReference type="SMR" id="Q9ZH75"/>
<dbReference type="GO" id="GO:0005737">
    <property type="term" value="C:cytoplasm"/>
    <property type="evidence" value="ECO:0007669"/>
    <property type="project" value="UniProtKB-SubCell"/>
</dbReference>
<dbReference type="GO" id="GO:0005886">
    <property type="term" value="C:plasma membrane"/>
    <property type="evidence" value="ECO:0007669"/>
    <property type="project" value="TreeGrafter"/>
</dbReference>
<dbReference type="GO" id="GO:0005524">
    <property type="term" value="F:ATP binding"/>
    <property type="evidence" value="ECO:0007669"/>
    <property type="project" value="UniProtKB-UniRule"/>
</dbReference>
<dbReference type="GO" id="GO:0016887">
    <property type="term" value="F:ATP hydrolysis activity"/>
    <property type="evidence" value="ECO:0007669"/>
    <property type="project" value="InterPro"/>
</dbReference>
<dbReference type="GO" id="GO:0003688">
    <property type="term" value="F:DNA replication origin binding"/>
    <property type="evidence" value="ECO:0007669"/>
    <property type="project" value="UniProtKB-UniRule"/>
</dbReference>
<dbReference type="GO" id="GO:0008289">
    <property type="term" value="F:lipid binding"/>
    <property type="evidence" value="ECO:0007669"/>
    <property type="project" value="UniProtKB-KW"/>
</dbReference>
<dbReference type="GO" id="GO:0006270">
    <property type="term" value="P:DNA replication initiation"/>
    <property type="evidence" value="ECO:0007669"/>
    <property type="project" value="UniProtKB-UniRule"/>
</dbReference>
<dbReference type="GO" id="GO:0006275">
    <property type="term" value="P:regulation of DNA replication"/>
    <property type="evidence" value="ECO:0007669"/>
    <property type="project" value="UniProtKB-UniRule"/>
</dbReference>
<dbReference type="CDD" id="cd00009">
    <property type="entry name" value="AAA"/>
    <property type="match status" value="1"/>
</dbReference>
<dbReference type="CDD" id="cd06571">
    <property type="entry name" value="Bac_DnaA_C"/>
    <property type="match status" value="1"/>
</dbReference>
<dbReference type="FunFam" id="1.10.1750.10:FF:000002">
    <property type="entry name" value="Chromosomal replication initiator protein DnaA"/>
    <property type="match status" value="1"/>
</dbReference>
<dbReference type="FunFam" id="1.10.8.60:FF:000003">
    <property type="entry name" value="Chromosomal replication initiator protein DnaA"/>
    <property type="match status" value="1"/>
</dbReference>
<dbReference type="FunFam" id="3.40.50.300:FF:000150">
    <property type="entry name" value="Chromosomal replication initiator protein DnaA"/>
    <property type="match status" value="1"/>
</dbReference>
<dbReference type="Gene3D" id="1.10.1750.10">
    <property type="match status" value="1"/>
</dbReference>
<dbReference type="Gene3D" id="1.10.8.60">
    <property type="match status" value="1"/>
</dbReference>
<dbReference type="Gene3D" id="3.30.300.180">
    <property type="match status" value="1"/>
</dbReference>
<dbReference type="Gene3D" id="3.40.50.300">
    <property type="entry name" value="P-loop containing nucleotide triphosphate hydrolases"/>
    <property type="match status" value="1"/>
</dbReference>
<dbReference type="HAMAP" id="MF_00377">
    <property type="entry name" value="DnaA_bact"/>
    <property type="match status" value="1"/>
</dbReference>
<dbReference type="InterPro" id="IPR003593">
    <property type="entry name" value="AAA+_ATPase"/>
</dbReference>
<dbReference type="InterPro" id="IPR001957">
    <property type="entry name" value="Chromosome_initiator_DnaA"/>
</dbReference>
<dbReference type="InterPro" id="IPR020591">
    <property type="entry name" value="Chromosome_initiator_DnaA-like"/>
</dbReference>
<dbReference type="InterPro" id="IPR018312">
    <property type="entry name" value="Chromosome_initiator_DnaA_CS"/>
</dbReference>
<dbReference type="InterPro" id="IPR013159">
    <property type="entry name" value="DnaA_C"/>
</dbReference>
<dbReference type="InterPro" id="IPR013317">
    <property type="entry name" value="DnaA_dom"/>
</dbReference>
<dbReference type="InterPro" id="IPR038454">
    <property type="entry name" value="DnaA_N_sf"/>
</dbReference>
<dbReference type="InterPro" id="IPR027417">
    <property type="entry name" value="P-loop_NTPase"/>
</dbReference>
<dbReference type="InterPro" id="IPR010921">
    <property type="entry name" value="Trp_repressor/repl_initiator"/>
</dbReference>
<dbReference type="NCBIfam" id="TIGR00362">
    <property type="entry name" value="DnaA"/>
    <property type="match status" value="1"/>
</dbReference>
<dbReference type="NCBIfam" id="NF010686">
    <property type="entry name" value="PRK14086.1"/>
    <property type="match status" value="1"/>
</dbReference>
<dbReference type="PANTHER" id="PTHR30050">
    <property type="entry name" value="CHROMOSOMAL REPLICATION INITIATOR PROTEIN DNAA"/>
    <property type="match status" value="1"/>
</dbReference>
<dbReference type="PANTHER" id="PTHR30050:SF2">
    <property type="entry name" value="CHROMOSOMAL REPLICATION INITIATOR PROTEIN DNAA"/>
    <property type="match status" value="1"/>
</dbReference>
<dbReference type="Pfam" id="PF00308">
    <property type="entry name" value="Bac_DnaA"/>
    <property type="match status" value="1"/>
</dbReference>
<dbReference type="Pfam" id="PF08299">
    <property type="entry name" value="Bac_DnaA_C"/>
    <property type="match status" value="1"/>
</dbReference>
<dbReference type="PRINTS" id="PR00051">
    <property type="entry name" value="DNAA"/>
</dbReference>
<dbReference type="SMART" id="SM00382">
    <property type="entry name" value="AAA"/>
    <property type="match status" value="1"/>
</dbReference>
<dbReference type="SMART" id="SM00760">
    <property type="entry name" value="Bac_DnaA_C"/>
    <property type="match status" value="1"/>
</dbReference>
<dbReference type="SUPFAM" id="SSF52540">
    <property type="entry name" value="P-loop containing nucleoside triphosphate hydrolases"/>
    <property type="match status" value="1"/>
</dbReference>
<dbReference type="SUPFAM" id="SSF48295">
    <property type="entry name" value="TrpR-like"/>
    <property type="match status" value="1"/>
</dbReference>
<dbReference type="PROSITE" id="PS01008">
    <property type="entry name" value="DNAA"/>
    <property type="match status" value="1"/>
</dbReference>
<feature type="chain" id="PRO_0000114270" description="Chromosomal replication initiator protein DnaA">
    <location>
        <begin position="1"/>
        <end position="624"/>
    </location>
</feature>
<feature type="region of interest" description="Domain I, interacts with DnaA modulators" evidence="1">
    <location>
        <begin position="1"/>
        <end position="99"/>
    </location>
</feature>
<feature type="region of interest" description="Disordered" evidence="2">
    <location>
        <begin position="88"/>
        <end position="284"/>
    </location>
</feature>
<feature type="region of interest" description="Domain II" evidence="1">
    <location>
        <begin position="100"/>
        <end position="283"/>
    </location>
</feature>
<feature type="region of interest" description="Domain III, AAA+ region" evidence="1">
    <location>
        <begin position="284"/>
        <end position="500"/>
    </location>
</feature>
<feature type="region of interest" description="Domain IV, binds dsDNA" evidence="1">
    <location>
        <begin position="501"/>
        <end position="624"/>
    </location>
</feature>
<feature type="compositionally biased region" description="Low complexity" evidence="2">
    <location>
        <begin position="102"/>
        <end position="112"/>
    </location>
</feature>
<feature type="compositionally biased region" description="Basic and acidic residues" evidence="2">
    <location>
        <begin position="118"/>
        <end position="141"/>
    </location>
</feature>
<feature type="compositionally biased region" description="Basic and acidic residues" evidence="2">
    <location>
        <begin position="176"/>
        <end position="206"/>
    </location>
</feature>
<feature type="compositionally biased region" description="Gly residues" evidence="2">
    <location>
        <begin position="250"/>
        <end position="264"/>
    </location>
</feature>
<feature type="binding site" evidence="1">
    <location>
        <position position="328"/>
    </location>
    <ligand>
        <name>ATP</name>
        <dbReference type="ChEBI" id="CHEBI:30616"/>
    </ligand>
</feature>
<feature type="binding site" evidence="1">
    <location>
        <position position="330"/>
    </location>
    <ligand>
        <name>ATP</name>
        <dbReference type="ChEBI" id="CHEBI:30616"/>
    </ligand>
</feature>
<feature type="binding site" evidence="1">
    <location>
        <position position="331"/>
    </location>
    <ligand>
        <name>ATP</name>
        <dbReference type="ChEBI" id="CHEBI:30616"/>
    </ligand>
</feature>
<feature type="binding site" evidence="1">
    <location>
        <position position="332"/>
    </location>
    <ligand>
        <name>ATP</name>
        <dbReference type="ChEBI" id="CHEBI:30616"/>
    </ligand>
</feature>
<accession>Q9ZH75</accession>
<sequence length="624" mass="69922">MADVPADLAAVWPRVLEQLLGEGQQGIEPKDKQWIERCQPLALVADTALLAVPNEWGKRVLEGRLAPLISETLTRECGRPIRIAITVDDSAGEPPSPPAPPMHQSHQSQQGHRYPAQQRDDAPRGDAYDGYGHRPSDDGMPTRRPAYPDYQQQRPEPGAWPRTQEDLSWQQPRHGGYQDREQPSGEPYRESESYRERENEQYREQAPEQWRQPYGTGRPQQPQHDYRSGPPEHQGYEQQRPDRQDQGQGPRQGGHGPGRTGGSVPGPMGAQPAPAPGPGEPHARLNPKYLFDTFVIGASNRFAHAAAVAVAEAPAKAYNPLFIYGESGLGKTHLLHAIGHYARSLYPGTRVRYVSSEEFTNEFINSIRDGKGDTFRKRYRDVDILLVDDIQFLASKESTQEEFFHTFNTLHNANKQIVLSSDRPPKQLVTLEDRLRNRFEWGLTTDVQPPELETRIAILRKKAVQEQLNAPPEVLEFIASRISRNIRELEGALIRVTAFASLNRQPVDLGLTEIVLKDLIPGGEESAPEITAPAIMAATADYFGLTVDDLCGSSRTRVLVTARQIAMYLCRELTDLSLPKIGAQFGGRDHTTVMHADRKIRALMAERRSIYNQVTELTNRIKNG</sequence>
<evidence type="ECO:0000255" key="1">
    <source>
        <dbReference type="HAMAP-Rule" id="MF_00377"/>
    </source>
</evidence>
<evidence type="ECO:0000256" key="2">
    <source>
        <dbReference type="SAM" id="MobiDB-lite"/>
    </source>
</evidence>
<evidence type="ECO:0000269" key="3">
    <source>
    </source>
</evidence>
<evidence type="ECO:0000305" key="4"/>
<reference key="1">
    <citation type="journal article" date="1998" name="Microbiology">
        <title>Structural elements of the Streptomyces oriC region and their interactions with the DnaA protein.</title>
        <authorList>
            <person name="Jakimowicz D."/>
            <person name="Majka J."/>
            <person name="Messer W."/>
            <person name="Speck C."/>
            <person name="Fernandez M."/>
            <person name="Martin M.C."/>
            <person name="Sanchez J."/>
            <person name="Schauwecker F."/>
            <person name="Keller U."/>
            <person name="Schrempf H."/>
            <person name="Zakrzewska-Czerwinska J."/>
        </authorList>
    </citation>
    <scope>NUCLEOTIDE SEQUENCE [GENOMIC DNA]</scope>
    <source>
        <strain>ATCC 11523 / DSM 40128 / JCM 4296 / LMG 20459 / NBRC 15393</strain>
    </source>
</reference>
<reference key="2">
    <citation type="journal article" date="2001" name="J. Biol. Chem.">
        <title>Sequence recognition, cooperative interaction, and dimerization of the initiator protein DnaA of Streptomyces.</title>
        <authorList>
            <person name="Majka J."/>
            <person name="Zakrzewska-Czerwinska J."/>
            <person name="Messer W."/>
        </authorList>
    </citation>
    <scope>DNAA BOX CONSENSUS</scope>
</reference>
<proteinExistence type="inferred from homology"/>
<protein>
    <recommendedName>
        <fullName evidence="1">Chromosomal replication initiator protein DnaA</fullName>
    </recommendedName>
</protein>
<keyword id="KW-0067">ATP-binding</keyword>
<keyword id="KW-0963">Cytoplasm</keyword>
<keyword id="KW-0235">DNA replication</keyword>
<keyword id="KW-0238">DNA-binding</keyword>
<keyword id="KW-0446">Lipid-binding</keyword>
<keyword id="KW-0547">Nucleotide-binding</keyword>
<organism>
    <name type="scientific">Streptomyces anulatus</name>
    <name type="common">Streptomyces chrysomallus</name>
    <dbReference type="NCBI Taxonomy" id="1892"/>
    <lineage>
        <taxon>Bacteria</taxon>
        <taxon>Bacillati</taxon>
        <taxon>Actinomycetota</taxon>
        <taxon>Actinomycetes</taxon>
        <taxon>Kitasatosporales</taxon>
        <taxon>Streptomycetaceae</taxon>
        <taxon>Streptomyces</taxon>
    </lineage>
</organism>
<gene>
    <name evidence="1" type="primary">dnaA</name>
</gene>
<comment type="function">
    <text evidence="1">Plays an essential role in the initiation and regulation of chromosomal replication. ATP-DnaA binds to the origin of replication (oriC) to initiate formation of the DNA replication initiation complex once per cell cycle. Binds the DnaA box (a 9 base pair repeat at the origin) and separates the double-stranded (ds)DNA. Forms a right-handed helical filament on oriC DNA; dsDNA binds to the exterior of the filament while single-stranded (ss)DNA is stabiized in the filament's interior. The ATP-DnaA-oriC complex binds and stabilizes one strand of the AT-rich DNA unwinding element (DUE), permitting loading of DNA polymerase. After initiation quickly degrades to an ADP-DnaA complex that is not apt for DNA replication. Binds acidic phospholipids.</text>
</comment>
<comment type="function">
    <text evidence="3">The DnaA box consensus is 5'-(T/C)(T/C)(G/AC)TCCACA-3'.</text>
</comment>
<comment type="subunit">
    <text evidence="1">Oligomerizes as a right-handed, spiral filament on DNA at oriC.</text>
</comment>
<comment type="subcellular location">
    <subcellularLocation>
        <location evidence="1">Cytoplasm</location>
    </subcellularLocation>
</comment>
<comment type="domain">
    <text evidence="1">Domain I is involved in oligomerization and binding regulators, domain II is flexibile and of varying length in different bacteria, domain III forms the AAA+ region, while domain IV binds dsDNA.</text>
</comment>
<comment type="similarity">
    <text evidence="1 4">Belongs to the DnaA family.</text>
</comment>
<name>DNAA_STRAQ</name>